<sequence length="331" mass="35540">MTIKVGINGFGRIGRIVFRAAQKRSDIEIVAINDLLDADYMAYMLKYDSTHGRFDGTVEVKDGHLIVNGKKIRVTAERDPANLKWDEVGVDVVAEATGIFLTDETARKHITAGAKKVVLTGPSKDNTPMFVKGANFDKYAGQDIVSNASCTTNCLAPLAKVINDNFGIIEGLMTTVHATTATQKTVDGPSHKDWRGGRGASQNIIPSSTGAAKAVGKVLPELNGKLTGMAFRVPTPNVSVVDLTVRLEKPATYEQIKAAVKAAAEGEMKGVLGYTEDDVVSTDFNGEVCTSVFDAKAGIALNDNFVKLVSWYDNETGYSNKVLDLIAHISK</sequence>
<reference key="1">
    <citation type="journal article" date="2009" name="PLoS Genet.">
        <title>Organised genome dynamics in the Escherichia coli species results in highly diverse adaptive paths.</title>
        <authorList>
            <person name="Touchon M."/>
            <person name="Hoede C."/>
            <person name="Tenaillon O."/>
            <person name="Barbe V."/>
            <person name="Baeriswyl S."/>
            <person name="Bidet P."/>
            <person name="Bingen E."/>
            <person name="Bonacorsi S."/>
            <person name="Bouchier C."/>
            <person name="Bouvet O."/>
            <person name="Calteau A."/>
            <person name="Chiapello H."/>
            <person name="Clermont O."/>
            <person name="Cruveiller S."/>
            <person name="Danchin A."/>
            <person name="Diard M."/>
            <person name="Dossat C."/>
            <person name="Karoui M.E."/>
            <person name="Frapy E."/>
            <person name="Garry L."/>
            <person name="Ghigo J.M."/>
            <person name="Gilles A.M."/>
            <person name="Johnson J."/>
            <person name="Le Bouguenec C."/>
            <person name="Lescat M."/>
            <person name="Mangenot S."/>
            <person name="Martinez-Jehanne V."/>
            <person name="Matic I."/>
            <person name="Nassif X."/>
            <person name="Oztas S."/>
            <person name="Petit M.A."/>
            <person name="Pichon C."/>
            <person name="Rouy Z."/>
            <person name="Ruf C.S."/>
            <person name="Schneider D."/>
            <person name="Tourret J."/>
            <person name="Vacherie B."/>
            <person name="Vallenet D."/>
            <person name="Medigue C."/>
            <person name="Rocha E.P.C."/>
            <person name="Denamur E."/>
        </authorList>
    </citation>
    <scope>NUCLEOTIDE SEQUENCE [LARGE SCALE GENOMIC DNA]</scope>
    <source>
        <strain>ATCC 35469 / DSM 13698 / BCRC 15582 / CCUG 18766 / IAM 14443 / JCM 21226 / LMG 7866 / NBRC 102419 / NCTC 12128 / CDC 0568-73</strain>
    </source>
</reference>
<reference key="2">
    <citation type="journal article" date="1991" name="J. Gen. Microbiol.">
        <title>Molecular and evolutionary relationships among enteric bacteria.</title>
        <authorList>
            <person name="Lawrence J.G."/>
            <person name="Ochman H."/>
            <person name="Hartl D.L."/>
        </authorList>
    </citation>
    <scope>NUCLEOTIDE SEQUENCE [GENOMIC DNA] OF 16-309</scope>
</reference>
<protein>
    <recommendedName>
        <fullName evidence="1">Glyceraldehyde-3-phosphate dehydrogenase</fullName>
        <shortName evidence="1">GAPDH</shortName>
        <ecNumber evidence="1">1.2.1.12</ecNumber>
    </recommendedName>
    <alternativeName>
        <fullName evidence="1">NAD-dependent glyceraldehyde-3-phosphate dehydrogenase</fullName>
    </alternativeName>
</protein>
<dbReference type="EC" id="1.2.1.12" evidence="1"/>
<dbReference type="EMBL" id="CU928158">
    <property type="protein sequence ID" value="CAQ88817.1"/>
    <property type="molecule type" value="Genomic_DNA"/>
</dbReference>
<dbReference type="EMBL" id="M63366">
    <property type="protein sequence ID" value="AAA23423.1"/>
    <property type="molecule type" value="Genomic_DNA"/>
</dbReference>
<dbReference type="RefSeq" id="WP_002431573.1">
    <property type="nucleotide sequence ID" value="NC_011740.1"/>
</dbReference>
<dbReference type="SMR" id="B7LQ20"/>
<dbReference type="GeneID" id="75057662"/>
<dbReference type="KEGG" id="efe:EFER_1293"/>
<dbReference type="HOGENOM" id="CLU_030140_0_3_6"/>
<dbReference type="OrthoDB" id="9803304at2"/>
<dbReference type="UniPathway" id="UPA00109">
    <property type="reaction ID" value="UER00184"/>
</dbReference>
<dbReference type="Proteomes" id="UP000000745">
    <property type="component" value="Chromosome"/>
</dbReference>
<dbReference type="GO" id="GO:0005737">
    <property type="term" value="C:cytoplasm"/>
    <property type="evidence" value="ECO:0007669"/>
    <property type="project" value="UniProtKB-SubCell"/>
</dbReference>
<dbReference type="GO" id="GO:0004365">
    <property type="term" value="F:glyceraldehyde-3-phosphate dehydrogenase (NAD+) (phosphorylating) activity"/>
    <property type="evidence" value="ECO:0000250"/>
    <property type="project" value="UniProtKB"/>
</dbReference>
<dbReference type="GO" id="GO:0051287">
    <property type="term" value="F:NAD binding"/>
    <property type="evidence" value="ECO:0000250"/>
    <property type="project" value="UniProtKB"/>
</dbReference>
<dbReference type="GO" id="GO:0050661">
    <property type="term" value="F:NADP binding"/>
    <property type="evidence" value="ECO:0007669"/>
    <property type="project" value="InterPro"/>
</dbReference>
<dbReference type="GO" id="GO:0006006">
    <property type="term" value="P:glucose metabolic process"/>
    <property type="evidence" value="ECO:0007669"/>
    <property type="project" value="InterPro"/>
</dbReference>
<dbReference type="GO" id="GO:0006096">
    <property type="term" value="P:glycolytic process"/>
    <property type="evidence" value="ECO:0007669"/>
    <property type="project" value="UniProtKB-UniPathway"/>
</dbReference>
<dbReference type="CDD" id="cd18126">
    <property type="entry name" value="GAPDH_I_C"/>
    <property type="match status" value="1"/>
</dbReference>
<dbReference type="CDD" id="cd05214">
    <property type="entry name" value="GAPDH_I_N"/>
    <property type="match status" value="1"/>
</dbReference>
<dbReference type="FunFam" id="3.30.360.10:FF:000001">
    <property type="entry name" value="Glyceraldehyde-3-phosphate dehydrogenase"/>
    <property type="match status" value="1"/>
</dbReference>
<dbReference type="FunFam" id="3.40.50.720:FF:000001">
    <property type="entry name" value="Glyceraldehyde-3-phosphate dehydrogenase"/>
    <property type="match status" value="1"/>
</dbReference>
<dbReference type="Gene3D" id="3.30.360.10">
    <property type="entry name" value="Dihydrodipicolinate Reductase, domain 2"/>
    <property type="match status" value="1"/>
</dbReference>
<dbReference type="Gene3D" id="3.40.50.720">
    <property type="entry name" value="NAD(P)-binding Rossmann-like Domain"/>
    <property type="match status" value="1"/>
</dbReference>
<dbReference type="InterPro" id="IPR020831">
    <property type="entry name" value="GlycerAld/Erythrose_P_DH"/>
</dbReference>
<dbReference type="InterPro" id="IPR020830">
    <property type="entry name" value="GlycerAld_3-P_DH_AS"/>
</dbReference>
<dbReference type="InterPro" id="IPR020829">
    <property type="entry name" value="GlycerAld_3-P_DH_cat"/>
</dbReference>
<dbReference type="InterPro" id="IPR020828">
    <property type="entry name" value="GlycerAld_3-P_DH_NAD(P)-bd"/>
</dbReference>
<dbReference type="InterPro" id="IPR006424">
    <property type="entry name" value="Glyceraldehyde-3-P_DH_1"/>
</dbReference>
<dbReference type="InterPro" id="IPR036291">
    <property type="entry name" value="NAD(P)-bd_dom_sf"/>
</dbReference>
<dbReference type="NCBIfam" id="TIGR01534">
    <property type="entry name" value="GAPDH-I"/>
    <property type="match status" value="1"/>
</dbReference>
<dbReference type="NCBIfam" id="NF011954">
    <property type="entry name" value="PRK15425.1"/>
    <property type="match status" value="1"/>
</dbReference>
<dbReference type="PANTHER" id="PTHR10836">
    <property type="entry name" value="GLYCERALDEHYDE 3-PHOSPHATE DEHYDROGENASE"/>
    <property type="match status" value="1"/>
</dbReference>
<dbReference type="PANTHER" id="PTHR10836:SF76">
    <property type="entry name" value="GLYCERALDEHYDE-3-PHOSPHATE DEHYDROGENASE-RELATED"/>
    <property type="match status" value="1"/>
</dbReference>
<dbReference type="Pfam" id="PF02800">
    <property type="entry name" value="Gp_dh_C"/>
    <property type="match status" value="1"/>
</dbReference>
<dbReference type="Pfam" id="PF00044">
    <property type="entry name" value="Gp_dh_N"/>
    <property type="match status" value="1"/>
</dbReference>
<dbReference type="PIRSF" id="PIRSF000149">
    <property type="entry name" value="GAP_DH"/>
    <property type="match status" value="1"/>
</dbReference>
<dbReference type="PRINTS" id="PR00078">
    <property type="entry name" value="G3PDHDRGNASE"/>
</dbReference>
<dbReference type="SMART" id="SM00846">
    <property type="entry name" value="Gp_dh_N"/>
    <property type="match status" value="1"/>
</dbReference>
<dbReference type="SUPFAM" id="SSF55347">
    <property type="entry name" value="Glyceraldehyde-3-phosphate dehydrogenase-like, C-terminal domain"/>
    <property type="match status" value="1"/>
</dbReference>
<dbReference type="SUPFAM" id="SSF51735">
    <property type="entry name" value="NAD(P)-binding Rossmann-fold domains"/>
    <property type="match status" value="1"/>
</dbReference>
<dbReference type="PROSITE" id="PS00071">
    <property type="entry name" value="GAPDH"/>
    <property type="match status" value="1"/>
</dbReference>
<comment type="function">
    <text evidence="1">Catalyzes the oxidative phosphorylation of glyceraldehyde 3-phosphate (G3P) to 1,3-bisphosphoglycerate (BPG) using the cofactor NAD. The first reaction step involves the formation of a hemiacetal intermediate between G3P and a cysteine residue, and this hemiacetal intermediate is then oxidized to a thioester, with concomitant reduction of NAD to NADH. The reduced NADH is then exchanged with the second NAD, and the thioester is attacked by a nucleophilic inorganic phosphate to produce BPG.</text>
</comment>
<comment type="catalytic activity">
    <reaction evidence="1">
        <text>D-glyceraldehyde 3-phosphate + phosphate + NAD(+) = (2R)-3-phospho-glyceroyl phosphate + NADH + H(+)</text>
        <dbReference type="Rhea" id="RHEA:10300"/>
        <dbReference type="ChEBI" id="CHEBI:15378"/>
        <dbReference type="ChEBI" id="CHEBI:43474"/>
        <dbReference type="ChEBI" id="CHEBI:57540"/>
        <dbReference type="ChEBI" id="CHEBI:57604"/>
        <dbReference type="ChEBI" id="CHEBI:57945"/>
        <dbReference type="ChEBI" id="CHEBI:59776"/>
        <dbReference type="EC" id="1.2.1.12"/>
    </reaction>
</comment>
<comment type="pathway">
    <text evidence="2">Carbohydrate degradation; glycolysis; pyruvate from D-glyceraldehyde 3-phosphate: step 1/5.</text>
</comment>
<comment type="subunit">
    <text evidence="1">Homotetramer.</text>
</comment>
<comment type="subcellular location">
    <subcellularLocation>
        <location evidence="2">Cytoplasm</location>
    </subcellularLocation>
</comment>
<comment type="similarity">
    <text evidence="2">Belongs to the glyceraldehyde-3-phosphate dehydrogenase family.</text>
</comment>
<feature type="chain" id="PRO_0000367318" description="Glyceraldehyde-3-phosphate dehydrogenase">
    <location>
        <begin position="1"/>
        <end position="331"/>
    </location>
</feature>
<feature type="active site" description="Nucleophile" evidence="1">
    <location>
        <position position="150"/>
    </location>
</feature>
<feature type="binding site" evidence="1">
    <location>
        <begin position="12"/>
        <end position="13"/>
    </location>
    <ligand>
        <name>NAD(+)</name>
        <dbReference type="ChEBI" id="CHEBI:57540"/>
    </ligand>
</feature>
<feature type="binding site" evidence="1">
    <location>
        <position position="34"/>
    </location>
    <ligand>
        <name>NAD(+)</name>
        <dbReference type="ChEBI" id="CHEBI:57540"/>
    </ligand>
</feature>
<feature type="binding site" evidence="1">
    <location>
        <position position="78"/>
    </location>
    <ligand>
        <name>NAD(+)</name>
        <dbReference type="ChEBI" id="CHEBI:57540"/>
    </ligand>
</feature>
<feature type="binding site" evidence="1">
    <location>
        <position position="120"/>
    </location>
    <ligand>
        <name>NAD(+)</name>
        <dbReference type="ChEBI" id="CHEBI:57540"/>
    </ligand>
</feature>
<feature type="binding site" evidence="1">
    <location>
        <begin position="149"/>
        <end position="151"/>
    </location>
    <ligand>
        <name>D-glyceraldehyde 3-phosphate</name>
        <dbReference type="ChEBI" id="CHEBI:59776"/>
    </ligand>
</feature>
<feature type="binding site" evidence="1">
    <location>
        <position position="180"/>
    </location>
    <ligand>
        <name>D-glyceraldehyde 3-phosphate</name>
        <dbReference type="ChEBI" id="CHEBI:59776"/>
    </ligand>
</feature>
<feature type="binding site" evidence="1">
    <location>
        <begin position="209"/>
        <end position="210"/>
    </location>
    <ligand>
        <name>D-glyceraldehyde 3-phosphate</name>
        <dbReference type="ChEBI" id="CHEBI:59776"/>
    </ligand>
</feature>
<feature type="binding site" evidence="1">
    <location>
        <position position="232"/>
    </location>
    <ligand>
        <name>D-glyceraldehyde 3-phosphate</name>
        <dbReference type="ChEBI" id="CHEBI:59776"/>
    </ligand>
</feature>
<feature type="binding site" evidence="1">
    <location>
        <position position="314"/>
    </location>
    <ligand>
        <name>NAD(+)</name>
        <dbReference type="ChEBI" id="CHEBI:57540"/>
    </ligand>
</feature>
<feature type="site" description="Activates thiol group during catalysis" evidence="1">
    <location>
        <position position="177"/>
    </location>
</feature>
<evidence type="ECO:0000250" key="1">
    <source>
        <dbReference type="UniProtKB" id="P0A9B2"/>
    </source>
</evidence>
<evidence type="ECO:0000305" key="2"/>
<accession>B7LQ20</accession>
<accession>P24746</accession>
<organism>
    <name type="scientific">Escherichia fergusonii (strain ATCC 35469 / DSM 13698 / CCUG 18766 / IAM 14443 / JCM 21226 / LMG 7866 / NBRC 102419 / NCTC 12128 / CDC 0568-73)</name>
    <dbReference type="NCBI Taxonomy" id="585054"/>
    <lineage>
        <taxon>Bacteria</taxon>
        <taxon>Pseudomonadati</taxon>
        <taxon>Pseudomonadota</taxon>
        <taxon>Gammaproteobacteria</taxon>
        <taxon>Enterobacterales</taxon>
        <taxon>Enterobacteriaceae</taxon>
        <taxon>Escherichia</taxon>
    </lineage>
</organism>
<gene>
    <name type="primary">gapA</name>
    <name type="synonym">gap</name>
    <name type="ordered locus">EFER_1293</name>
</gene>
<name>G3P_ESCF3</name>
<keyword id="KW-0963">Cytoplasm</keyword>
<keyword id="KW-0324">Glycolysis</keyword>
<keyword id="KW-0520">NAD</keyword>
<keyword id="KW-0547">Nucleotide-binding</keyword>
<keyword id="KW-0560">Oxidoreductase</keyword>
<proteinExistence type="inferred from homology"/>